<keyword id="KW-0050">Antiport</keyword>
<keyword id="KW-0997">Cell inner membrane</keyword>
<keyword id="KW-1003">Cell membrane</keyword>
<keyword id="KW-0406">Ion transport</keyword>
<keyword id="KW-0472">Membrane</keyword>
<keyword id="KW-1185">Reference proteome</keyword>
<keyword id="KW-0915">Sodium</keyword>
<keyword id="KW-0739">Sodium transport</keyword>
<keyword id="KW-0812">Transmembrane</keyword>
<keyword id="KW-1133">Transmembrane helix</keyword>
<keyword id="KW-0813">Transport</keyword>
<gene>
    <name evidence="1" type="primary">nhaB</name>
    <name type="ordered locus">E2348C_1305</name>
</gene>
<name>NHAB_ECO27</name>
<reference key="1">
    <citation type="journal article" date="2009" name="J. Bacteriol.">
        <title>Complete genome sequence and comparative genome analysis of enteropathogenic Escherichia coli O127:H6 strain E2348/69.</title>
        <authorList>
            <person name="Iguchi A."/>
            <person name="Thomson N.R."/>
            <person name="Ogura Y."/>
            <person name="Saunders D."/>
            <person name="Ooka T."/>
            <person name="Henderson I.R."/>
            <person name="Harris D."/>
            <person name="Asadulghani M."/>
            <person name="Kurokawa K."/>
            <person name="Dean P."/>
            <person name="Kenny B."/>
            <person name="Quail M.A."/>
            <person name="Thurston S."/>
            <person name="Dougan G."/>
            <person name="Hayashi T."/>
            <person name="Parkhill J."/>
            <person name="Frankel G."/>
        </authorList>
    </citation>
    <scope>NUCLEOTIDE SEQUENCE [LARGE SCALE GENOMIC DNA]</scope>
    <source>
        <strain>E2348/69 / EPEC</strain>
    </source>
</reference>
<protein>
    <recommendedName>
        <fullName evidence="1">Na(+)/H(+) antiporter NhaB</fullName>
    </recommendedName>
    <alternativeName>
        <fullName evidence="1">Sodium/proton antiporter NhaB</fullName>
    </alternativeName>
</protein>
<proteinExistence type="inferred from homology"/>
<feature type="chain" id="PRO_1000185776" description="Na(+)/H(+) antiporter NhaB">
    <location>
        <begin position="1"/>
        <end position="513"/>
    </location>
</feature>
<feature type="transmembrane region" description="Helical" evidence="1">
    <location>
        <begin position="23"/>
        <end position="43"/>
    </location>
</feature>
<feature type="transmembrane region" description="Helical" evidence="1">
    <location>
        <begin position="52"/>
        <end position="72"/>
    </location>
</feature>
<feature type="transmembrane region" description="Helical" evidence="1">
    <location>
        <begin position="97"/>
        <end position="117"/>
    </location>
</feature>
<feature type="transmembrane region" description="Helical" evidence="1">
    <location>
        <begin position="120"/>
        <end position="140"/>
    </location>
</feature>
<feature type="transmembrane region" description="Helical" evidence="1">
    <location>
        <begin position="144"/>
        <end position="164"/>
    </location>
</feature>
<feature type="transmembrane region" description="Helical" evidence="1">
    <location>
        <begin position="202"/>
        <end position="222"/>
    </location>
</feature>
<feature type="transmembrane region" description="Helical" evidence="1">
    <location>
        <begin position="238"/>
        <end position="258"/>
    </location>
</feature>
<feature type="transmembrane region" description="Helical" evidence="1">
    <location>
        <begin position="303"/>
        <end position="323"/>
    </location>
</feature>
<feature type="transmembrane region" description="Helical" evidence="1">
    <location>
        <begin position="348"/>
        <end position="368"/>
    </location>
</feature>
<feature type="transmembrane region" description="Helical" evidence="1">
    <location>
        <begin position="391"/>
        <end position="411"/>
    </location>
</feature>
<feature type="transmembrane region" description="Helical" evidence="1">
    <location>
        <begin position="447"/>
        <end position="467"/>
    </location>
</feature>
<feature type="transmembrane region" description="Helical" evidence="1">
    <location>
        <begin position="475"/>
        <end position="495"/>
    </location>
</feature>
<organism>
    <name type="scientific">Escherichia coli O127:H6 (strain E2348/69 / EPEC)</name>
    <dbReference type="NCBI Taxonomy" id="574521"/>
    <lineage>
        <taxon>Bacteria</taxon>
        <taxon>Pseudomonadati</taxon>
        <taxon>Pseudomonadota</taxon>
        <taxon>Gammaproteobacteria</taxon>
        <taxon>Enterobacterales</taxon>
        <taxon>Enterobacteriaceae</taxon>
        <taxon>Escherichia</taxon>
    </lineage>
</organism>
<evidence type="ECO:0000255" key="1">
    <source>
        <dbReference type="HAMAP-Rule" id="MF_01599"/>
    </source>
</evidence>
<dbReference type="EMBL" id="FM180568">
    <property type="protein sequence ID" value="CAS08853.1"/>
    <property type="molecule type" value="Genomic_DNA"/>
</dbReference>
<dbReference type="RefSeq" id="WP_000406376.1">
    <property type="nucleotide sequence ID" value="NC_011601.1"/>
</dbReference>
<dbReference type="SMR" id="B7UQ70"/>
<dbReference type="KEGG" id="ecg:E2348C_1305"/>
<dbReference type="HOGENOM" id="CLU_041110_0_0_6"/>
<dbReference type="Proteomes" id="UP000008205">
    <property type="component" value="Chromosome"/>
</dbReference>
<dbReference type="GO" id="GO:0005886">
    <property type="term" value="C:plasma membrane"/>
    <property type="evidence" value="ECO:0007669"/>
    <property type="project" value="UniProtKB-SubCell"/>
</dbReference>
<dbReference type="GO" id="GO:0015385">
    <property type="term" value="F:sodium:proton antiporter activity"/>
    <property type="evidence" value="ECO:0007669"/>
    <property type="project" value="InterPro"/>
</dbReference>
<dbReference type="HAMAP" id="MF_01599">
    <property type="entry name" value="NhaB"/>
    <property type="match status" value="1"/>
</dbReference>
<dbReference type="InterPro" id="IPR004671">
    <property type="entry name" value="Na+/H+_antiporter_NhaB"/>
</dbReference>
<dbReference type="NCBIfam" id="TIGR00774">
    <property type="entry name" value="NhaB"/>
    <property type="match status" value="1"/>
</dbReference>
<dbReference type="NCBIfam" id="NF007093">
    <property type="entry name" value="PRK09547.1"/>
    <property type="match status" value="1"/>
</dbReference>
<dbReference type="PANTHER" id="PTHR43302:SF1">
    <property type="entry name" value="NA(+)_H(+) ANTIPORTER NHAB"/>
    <property type="match status" value="1"/>
</dbReference>
<dbReference type="PANTHER" id="PTHR43302">
    <property type="entry name" value="TRANSPORTER ARSB-RELATED"/>
    <property type="match status" value="1"/>
</dbReference>
<dbReference type="Pfam" id="PF06450">
    <property type="entry name" value="NhaB"/>
    <property type="match status" value="1"/>
</dbReference>
<accession>B7UQ70</accession>
<sequence>MEISWGRALWRNFLGQSPDWYKLALIIFLIVNPLIFLISPFVAGWLLVAEFIFTLAMALKCYPLLPGGLLAIEAVFIGMTSAEHVREEVAANLEVLLLLMFMVAGIYFMKQLLLFIFTRLLLSIRSKMLLSLSFCVAAAFLSAFLDALTVVAVVISVAVGFYGIYHRVASSRAEDTDLQDDSHIDKHYKVVLEQFRGFLRSLMMHAGVGTALGGVMTMVGEPQNLIIAKAAGWHFGDFFLRMSPVTVPVLICGLLTCLLVEKLRWFGYGETLPEKVREVLQQFDDQSRLQRTRQDKIRLIVQAIIGVWLVTALALHLAEVGLIGLSVIILATSLTGVTDEHAIGKAFTESLPFTALLTVFFSVVAVIIDQQLFSPIIQFVLQASEHAQLSLFYIFNGLLSSISDNVFVGTIYINEAKAAMESGAITLKQYELLAVAINTGTNLPSVATPNGQAAFLFLLTSALAPLIRLSYGRMVWMALPYTLVLTVAGLLCVEFTLAPVTEWFMQMGWIATL</sequence>
<comment type="function">
    <text evidence="1">Na(+)/H(+) antiporter that extrudes sodium in exchange for external protons.</text>
</comment>
<comment type="catalytic activity">
    <reaction evidence="1">
        <text>2 Na(+)(in) + 3 H(+)(out) = 2 Na(+)(out) + 3 H(+)(in)</text>
        <dbReference type="Rhea" id="RHEA:29247"/>
        <dbReference type="ChEBI" id="CHEBI:15378"/>
        <dbReference type="ChEBI" id="CHEBI:29101"/>
    </reaction>
    <physiologicalReaction direction="left-to-right" evidence="1">
        <dbReference type="Rhea" id="RHEA:29248"/>
    </physiologicalReaction>
</comment>
<comment type="subcellular location">
    <subcellularLocation>
        <location evidence="1">Cell inner membrane</location>
        <topology evidence="1">Multi-pass membrane protein</topology>
    </subcellularLocation>
</comment>
<comment type="similarity">
    <text evidence="1">Belongs to the NhaB Na(+)/H(+) (TC 2.A.34) antiporter family.</text>
</comment>